<keyword id="KW-0002">3D-structure</keyword>
<keyword id="KW-0007">Acetylation</keyword>
<keyword id="KW-0238">DNA-binding</keyword>
<keyword id="KW-1017">Isopeptide bond</keyword>
<keyword id="KW-0539">Nucleus</keyword>
<keyword id="KW-0597">Phosphoprotein</keyword>
<keyword id="KW-1267">Proteomics identification</keyword>
<keyword id="KW-1185">Reference proteome</keyword>
<keyword id="KW-0678">Repressor</keyword>
<keyword id="KW-0804">Transcription</keyword>
<keyword id="KW-0805">Transcription regulation</keyword>
<keyword id="KW-0832">Ubl conjugation</keyword>
<reference key="1">
    <citation type="journal article" date="1997" name="J. Biol. Chem.">
        <title>hMAF, a small human transcription factor that heterodimerizes specifically with Nrf1 and Nrf2.</title>
        <authorList>
            <person name="Marini M.G."/>
            <person name="Chan K."/>
            <person name="Casula L."/>
            <person name="Kan Y.W."/>
            <person name="Cao A."/>
            <person name="Moi P."/>
        </authorList>
    </citation>
    <scope>NUCLEOTIDE SEQUENCE [MRNA]</scope>
</reference>
<reference key="2">
    <citation type="journal article" date="1997" name="Blood">
        <title>Human MafG is a functional partner for p45 NF-E2 in activating globin gene expression.</title>
        <authorList>
            <person name="Blank V."/>
            <person name="Kim M.J."/>
            <person name="Andrews N.C."/>
        </authorList>
    </citation>
    <scope>NUCLEOTIDE SEQUENCE [MRNA]</scope>
    <source>
        <tissue>Muscle</tissue>
    </source>
</reference>
<reference key="3">
    <citation type="journal article" date="1997" name="Genomics">
        <title>Molecular characterization and localization of the human MAFG gene.</title>
        <authorList>
            <person name="Blank V."/>
            <person name="Knoll J.H.M."/>
            <person name="Andrews N.C."/>
        </authorList>
    </citation>
    <scope>NUCLEOTIDE SEQUENCE [MRNA]</scope>
    <source>
        <tissue>Muscle</tissue>
    </source>
</reference>
<reference key="4">
    <citation type="journal article" date="1997" name="Oncogene">
        <title>Human small Maf proteins form heterodimers with CNC family transcription factors and recognize the NF-E2 motif.</title>
        <authorList>
            <person name="Toki T."/>
            <person name="Itoh J."/>
            <person name="Kitazawa J."/>
            <person name="Arai K."/>
            <person name="Hatakeyama K."/>
            <person name="Akasaka J."/>
            <person name="Igarashi K."/>
            <person name="Nomura N."/>
            <person name="Yokoyama M."/>
            <person name="Yamamoto M."/>
            <person name="Ito E."/>
        </authorList>
    </citation>
    <scope>NUCLEOTIDE SEQUENCE [MRNA]</scope>
</reference>
<reference key="5">
    <citation type="submission" date="1998-04" db="EMBL/GenBank/DDBJ databases">
        <authorList>
            <person name="Ito E."/>
            <person name="Toki T."/>
        </authorList>
    </citation>
    <scope>NUCLEOTIDE SEQUENCE [MRNA]</scope>
</reference>
<reference key="6">
    <citation type="journal article" date="2004" name="Genome Res.">
        <title>The status, quality, and expansion of the NIH full-length cDNA project: the Mammalian Gene Collection (MGC).</title>
        <authorList>
            <consortium name="The MGC Project Team"/>
        </authorList>
    </citation>
    <scope>NUCLEOTIDE SEQUENCE [LARGE SCALE MRNA]</scope>
    <source>
        <tissue>Lung</tissue>
    </source>
</reference>
<reference key="7">
    <citation type="journal article" date="1996" name="Nucleic Acids Res.">
        <title>Small Maf proteins interact with the human transcription factor TCF11/Nrf1/LCR-F1.</title>
        <authorList>
            <person name="Johnsen O."/>
            <person name="Skammelsrud N."/>
            <person name="Luna L."/>
            <person name="Nishizawa M."/>
            <person name="Prydz H."/>
            <person name="Kolstoe A.B."/>
        </authorList>
    </citation>
    <scope>FUNCTION</scope>
    <scope>DNA-BINDING</scope>
    <scope>INTERACTION WITH NFE2L1</scope>
</reference>
<reference key="8">
    <citation type="journal article" date="1998" name="Nucleic Acids Res.">
        <title>Interaction of the CNC-bZIP factor TCF11/LCR-F1/Nrf1 with MafG: binding-site selection and regulation of transcription.</title>
        <authorList>
            <person name="Johnsen O."/>
            <person name="Murphy P."/>
            <person name="Prydz H."/>
            <person name="Kolsto A.B."/>
        </authorList>
    </citation>
    <scope>FUNCTION</scope>
    <scope>DNA-BINDING</scope>
    <scope>INTERACTION WITH NFE2L1</scope>
</reference>
<reference key="9">
    <citation type="journal article" date="2001" name="J. Biol. Chem.">
        <title>Stimulation of NF-E2 DNA binding by CREB-binding protein (CBP)-mediated acetylation.</title>
        <authorList>
            <person name="Hung H.-L."/>
            <person name="Kim A.Y."/>
            <person name="Hong W."/>
            <person name="Rakowski C."/>
            <person name="Blobel G.A."/>
        </authorList>
    </citation>
    <scope>ACETYLATION AT LYS-53; LYS-60; LYS-71 AND LYS-76</scope>
    <scope>FUNCTION</scope>
    <scope>INTERACTION WITH NFE2 AND CREBBP</scope>
    <scope>SUBCELLULAR LOCATION</scope>
    <scope>MUTAGENESIS OF LYS-53; LYS-60; LYS-71 AND LYS-76</scope>
</reference>
<reference key="10">
    <citation type="journal article" date="2010" name="Sci. Signal.">
        <title>Quantitative phosphoproteomics reveals widespread full phosphorylation site occupancy during mitosis.</title>
        <authorList>
            <person name="Olsen J.V."/>
            <person name="Vermeulen M."/>
            <person name="Santamaria A."/>
            <person name="Kumar C."/>
            <person name="Miller M.L."/>
            <person name="Jensen L.J."/>
            <person name="Gnad F."/>
            <person name="Cox J."/>
            <person name="Jensen T.S."/>
            <person name="Nigg E.A."/>
            <person name="Brunak S."/>
            <person name="Mann M."/>
        </authorList>
    </citation>
    <scope>PHOSPHORYLATION [LARGE SCALE ANALYSIS] AT SER-124</scope>
    <scope>IDENTIFICATION BY MASS SPECTROMETRY [LARGE SCALE ANALYSIS]</scope>
    <source>
        <tissue>Cervix carcinoma</tissue>
    </source>
</reference>
<reference key="11">
    <citation type="journal article" date="2013" name="J. Proteome Res.">
        <title>Toward a comprehensive characterization of a human cancer cell phosphoproteome.</title>
        <authorList>
            <person name="Zhou H."/>
            <person name="Di Palma S."/>
            <person name="Preisinger C."/>
            <person name="Peng M."/>
            <person name="Polat A.N."/>
            <person name="Heck A.J."/>
            <person name="Mohammed S."/>
        </authorList>
    </citation>
    <scope>PHOSPHORYLATION [LARGE SCALE ANALYSIS] AT SER-124</scope>
    <scope>IDENTIFICATION BY MASS SPECTROMETRY [LARGE SCALE ANALYSIS]</scope>
    <source>
        <tissue>Cervix carcinoma</tissue>
        <tissue>Erythroleukemia</tissue>
    </source>
</reference>
<reference key="12">
    <citation type="journal article" date="2014" name="Nat. Struct. Mol. Biol.">
        <title>Uncovering global SUMOylation signaling networks in a site-specific manner.</title>
        <authorList>
            <person name="Hendriks I.A."/>
            <person name="D'Souza R.C."/>
            <person name="Yang B."/>
            <person name="Verlaan-de Vries M."/>
            <person name="Mann M."/>
            <person name="Vertegaal A.C."/>
        </authorList>
    </citation>
    <scope>SUMOYLATION [LARGE SCALE ANALYSIS] AT LYS-14</scope>
    <scope>IDENTIFICATION BY MASS SPECTROMETRY [LARGE SCALE ANALYSIS]</scope>
</reference>
<reference key="13">
    <citation type="journal article" date="2014" name="Proc. Natl. Acad. Sci. U.S.A.">
        <title>Mapping of SUMO sites and analysis of SUMOylation changes induced by external stimuli.</title>
        <authorList>
            <person name="Impens F."/>
            <person name="Radoshevich L."/>
            <person name="Cossart P."/>
            <person name="Ribet D."/>
        </authorList>
    </citation>
    <scope>SUMOYLATION [LARGE SCALE ANALYSIS] AT LYS-14</scope>
    <scope>IDENTIFICATION BY MASS SPECTROMETRY [LARGE SCALE ANALYSIS]</scope>
</reference>
<reference key="14">
    <citation type="journal article" date="2015" name="Cell Rep.">
        <title>SUMO-2 orchestrates chromatin modifiers in response to DNA damage.</title>
        <authorList>
            <person name="Hendriks I.A."/>
            <person name="Treffers L.W."/>
            <person name="Verlaan-de Vries M."/>
            <person name="Olsen J.V."/>
            <person name="Vertegaal A.C."/>
        </authorList>
    </citation>
    <scope>SUMOYLATION [LARGE SCALE ANALYSIS] AT LYS-14</scope>
    <scope>IDENTIFICATION BY MASS SPECTROMETRY [LARGE SCALE ANALYSIS]</scope>
</reference>
<reference key="15">
    <citation type="journal article" date="2015" name="Mol. Cell. Proteomics">
        <title>System-wide analysis of SUMOylation dynamics in response to replication stress reveals novel small ubiquitin-like modified target proteins and acceptor lysines relevant for genome stability.</title>
        <authorList>
            <person name="Xiao Z."/>
            <person name="Chang J.G."/>
            <person name="Hendriks I.A."/>
            <person name="Sigurdsson J.O."/>
            <person name="Olsen J.V."/>
            <person name="Vertegaal A.C."/>
        </authorList>
    </citation>
    <scope>SUMOYLATION [LARGE SCALE ANALYSIS] AT LYS-14</scope>
    <scope>IDENTIFICATION BY MASS SPECTROMETRY [LARGE SCALE ANALYSIS]</scope>
</reference>
<reference key="16">
    <citation type="journal article" date="2017" name="Nat. Struct. Mol. Biol.">
        <title>Site-specific mapping of the human SUMO proteome reveals co-modification with phosphorylation.</title>
        <authorList>
            <person name="Hendriks I.A."/>
            <person name="Lyon D."/>
            <person name="Young C."/>
            <person name="Jensen L.J."/>
            <person name="Vertegaal A.C."/>
            <person name="Nielsen M.L."/>
        </authorList>
    </citation>
    <scope>SUMOYLATION [LARGE SCALE ANALYSIS] AT LYS-14</scope>
    <scope>IDENTIFICATION BY MASS SPECTROMETRY [LARGE SCALE ANALYSIS]</scope>
</reference>
<protein>
    <recommendedName>
        <fullName>Transcription factor MafG</fullName>
    </recommendedName>
    <alternativeName>
        <fullName>V-maf musculoaponeurotic fibrosarcoma oncogene homolog G</fullName>
    </alternativeName>
    <alternativeName>
        <fullName>hMAF</fullName>
    </alternativeName>
</protein>
<name>MAFG_HUMAN</name>
<gene>
    <name type="primary">MAFG</name>
</gene>
<proteinExistence type="evidence at protein level"/>
<accession>O15525</accession>
<comment type="function">
    <text evidence="2 5 6 7">Since they lack a putative transactivation domain, the small Mafs behave as transcriptional repressors when they dimerize among themselves (PubMed:11154691). However, they seem to serve as transcriptional activators by dimerizing with other (usually larger) basic-zipper proteins, such as NFE2, NFE2L1 and NFE2L2, and recruiting them to specific DNA-binding sites (PubMed:11154691, PubMed:8932385, PubMed:9421508). Small Maf proteins heterodimerize with Fos and may act as competitive repressors of the NFE2L2 transcription factor (PubMed:11154691). Transcription factor, component of erythroid-specific transcription factor NFE2L2 (PubMed:11154691). Activates globin gene expression when associated with NFE2L2 (PubMed:11154691). May be involved in signal transduction of extracellular H(+) (By similarity).</text>
</comment>
<comment type="subunit">
    <text evidence="5 6 7">Homodimer or heterodimer. Homodimerization leads to transcriptional repression. Forms high affinity heterodimers with members of the CNC-bZIP family such as NFE2, NFE2L1/NRF1, NFE2L2/NRF2 and NFE2L3/NRF3 (PubMed:11154691, PubMed:8932385, PubMed:9421508). Interacts with CREBBP; the interaction leads to acetylation of the basic region of MAFG and stimulation of NFE2 transcriptional activity through increased DNA binding.</text>
</comment>
<comment type="interaction">
    <interactant intactId="EBI-713514">
        <id>O15525</id>
    </interactant>
    <interactant intactId="EBI-1263541">
        <id>O14867</id>
        <label>BACH1</label>
    </interactant>
    <organismsDiffer>false</organismsDiffer>
    <experiments>8</experiments>
</comment>
<comment type="interaction">
    <interactant intactId="EBI-713514">
        <id>O15525</id>
    </interactant>
    <interactant intactId="EBI-1642333">
        <id>Q9BYV9</id>
        <label>BACH2</label>
    </interactant>
    <organismsDiffer>false</organismsDiffer>
    <experiments>6</experiments>
</comment>
<comment type="interaction">
    <interactant intactId="EBI-713514">
        <id>O15525</id>
    </interactant>
    <interactant intactId="EBI-10312707">
        <id>Q9NR55</id>
        <label>BATF3</label>
    </interactant>
    <organismsDiffer>false</organismsDiffer>
    <experiments>2</experiments>
</comment>
<comment type="interaction">
    <interactant intactId="EBI-713514">
        <id>O15525</id>
    </interactant>
    <interactant intactId="EBI-721128">
        <id>Q9ULX9</id>
        <label>MAFF</label>
    </interactant>
    <organismsDiffer>false</organismsDiffer>
    <experiments>2</experiments>
</comment>
<comment type="interaction">
    <interactant intactId="EBI-713514">
        <id>O15525</id>
    </interactant>
    <interactant intactId="EBI-713514">
        <id>O15525</id>
        <label>MAFG</label>
    </interactant>
    <organismsDiffer>false</organismsDiffer>
    <experiments>2</experiments>
</comment>
<comment type="interaction">
    <interactant intactId="EBI-713514">
        <id>O15525</id>
    </interactant>
    <interactant intactId="EBI-2804436">
        <id>Q14494</id>
        <label>NFE2L1</label>
    </interactant>
    <organismsDiffer>false</organismsDiffer>
    <experiments>5</experiments>
</comment>
<comment type="interaction">
    <interactant intactId="EBI-713514">
        <id>O15525</id>
    </interactant>
    <interactant intactId="EBI-11745778">
        <id>Q14494-2</id>
        <label>NFE2L1</label>
    </interactant>
    <organismsDiffer>false</organismsDiffer>
    <experiments>3</experiments>
</comment>
<comment type="interaction">
    <interactant intactId="EBI-713514">
        <id>O15525</id>
    </interactant>
    <interactant intactId="EBI-2007911">
        <id>Q16236</id>
        <label>NFE2L2</label>
    </interactant>
    <organismsDiffer>false</organismsDiffer>
    <experiments>16</experiments>
</comment>
<comment type="interaction">
    <interactant intactId="EBI-713514">
        <id>O15525</id>
    </interactant>
    <interactant intactId="EBI-10890629">
        <id>Q9Y4A8</id>
        <label>NFE2L3</label>
    </interactant>
    <organismsDiffer>false</organismsDiffer>
    <experiments>6</experiments>
</comment>
<comment type="interaction">
    <interactant intactId="EBI-713514">
        <id>O15525</id>
    </interactant>
    <interactant intactId="EBI-3951858">
        <id>Q16649</id>
        <label>NFIL3</label>
    </interactant>
    <organismsDiffer>false</organismsDiffer>
    <experiments>2</experiments>
</comment>
<comment type="interaction">
    <interactant intactId="EBI-713514">
        <id>O15525</id>
    </interactant>
    <interactant intactId="EBI-10890294">
        <id>P0C746</id>
        <label>HBZ</label>
    </interactant>
    <organismsDiffer>true</organismsDiffer>
    <experiments>3</experiments>
</comment>
<comment type="subcellular location">
    <subcellularLocation>
        <location evidence="3 5">Nucleus</location>
    </subcellularLocation>
</comment>
<comment type="tissue specificity">
    <text>Highly expressed in skeletal muscle. Also expressed in heart and brain.</text>
</comment>
<comment type="PTM">
    <text evidence="5">Acetylated in erythroid cells by CREB-binding protein (CBP). Acetylation augments the DNA-binding activity of NFE2, but has no effect on binding NFE2.</text>
</comment>
<comment type="PTM">
    <text evidence="1">Sumoylation at Lys-14 is required for active transcriptional repression.</text>
</comment>
<comment type="similarity">
    <text evidence="8">Belongs to the bZIP family. Maf subfamily.</text>
</comment>
<sequence length="162" mass="17850">MTTPNKGNKALKVKREPGENGTSLTDEELVTMSVRELNQHLRGLSKEEIVQLKQRRRTLKNRGYAASCRVKRVTQKEELEKQKAELQQEVEKLASENASMKLELDALRSKYEALQTFARTVARSPVAPARGPLAAGLGPLVPGKVAATSVITIVKSKTDARS</sequence>
<feature type="chain" id="PRO_0000076500" description="Transcription factor MafG">
    <location>
        <begin position="1"/>
        <end position="162"/>
    </location>
</feature>
<feature type="domain" description="bZIP" evidence="3">
    <location>
        <begin position="51"/>
        <end position="114"/>
    </location>
</feature>
<feature type="region of interest" description="Disordered" evidence="4">
    <location>
        <begin position="1"/>
        <end position="24"/>
    </location>
</feature>
<feature type="region of interest" description="Basic motif" evidence="3">
    <location>
        <begin position="53"/>
        <end position="76"/>
    </location>
</feature>
<feature type="region of interest" description="Leucine-zipper" evidence="3">
    <location>
        <begin position="79"/>
        <end position="93"/>
    </location>
</feature>
<feature type="modified residue" description="N6-acetyllysine" evidence="9">
    <location>
        <position position="53"/>
    </location>
</feature>
<feature type="modified residue" description="N6-acetyllysine" evidence="9">
    <location>
        <position position="60"/>
    </location>
</feature>
<feature type="modified residue" description="N6-acetyllysine" evidence="9">
    <location>
        <position position="71"/>
    </location>
</feature>
<feature type="modified residue" description="N6-acetyllysine" evidence="9">
    <location>
        <position position="76"/>
    </location>
</feature>
<feature type="modified residue" description="Phosphoserine" evidence="10 11">
    <location>
        <position position="124"/>
    </location>
</feature>
<feature type="cross-link" description="Glycyl lysine isopeptide (Lys-Gly) (interchain with G-Cter in SUMO); alternate">
    <location>
        <position position="14"/>
    </location>
</feature>
<feature type="cross-link" description="Glycyl lysine isopeptide (Lys-Gly) (interchain with G-Cter in SUMO2); alternate" evidence="12 13 14 15 16">
    <location>
        <position position="14"/>
    </location>
</feature>
<feature type="mutagenesis site" description="Abolishes acetylation. Has no effect on binding to NFE2 but impairs the DNA binding and transcriptional activities of NFE2; when associated with A-60; A-71 and A-76." evidence="5">
    <original>K</original>
    <variation>A</variation>
    <location>
        <position position="53"/>
    </location>
</feature>
<feature type="mutagenesis site" description="Abolishes acetylation. Has no effect on binding to NFE2 but impairs the DNA binding and transcriptional activities of NFE2; when associated with A-53; A-71 and A-76." evidence="5">
    <original>K</original>
    <variation>A</variation>
    <location>
        <position position="60"/>
    </location>
</feature>
<feature type="mutagenesis site" description="Abolishes acetylation. Has no effect on binding to NFE2 but impairs the DNA binding and transcriptional activities of NFE2; when associated with A-53; A-60; and A-76." evidence="5">
    <original>K</original>
    <variation>A</variation>
    <location>
        <position position="71"/>
    </location>
</feature>
<feature type="mutagenesis site" description="Abolishes acetylation. Has no effect on binding to NFE2 but impairs the DNA binding and transcriptional activities of NFE2; when associated with A-53; A-60 and A-71." evidence="5">
    <original>K</original>
    <variation>A</variation>
    <location>
        <position position="76"/>
    </location>
</feature>
<feature type="helix" evidence="17">
    <location>
        <begin position="26"/>
        <end position="30"/>
    </location>
</feature>
<feature type="helix" evidence="17">
    <location>
        <begin position="34"/>
        <end position="37"/>
    </location>
</feature>
<feature type="helix" evidence="18">
    <location>
        <begin position="38"/>
        <end position="40"/>
    </location>
</feature>
<feature type="helix" evidence="17">
    <location>
        <begin position="46"/>
        <end position="120"/>
    </location>
</feature>
<organism>
    <name type="scientific">Homo sapiens</name>
    <name type="common">Human</name>
    <dbReference type="NCBI Taxonomy" id="9606"/>
    <lineage>
        <taxon>Eukaryota</taxon>
        <taxon>Metazoa</taxon>
        <taxon>Chordata</taxon>
        <taxon>Craniata</taxon>
        <taxon>Vertebrata</taxon>
        <taxon>Euteleostomi</taxon>
        <taxon>Mammalia</taxon>
        <taxon>Eutheria</taxon>
        <taxon>Euarchontoglires</taxon>
        <taxon>Primates</taxon>
        <taxon>Haplorrhini</taxon>
        <taxon>Catarrhini</taxon>
        <taxon>Hominidae</taxon>
        <taxon>Homo</taxon>
    </lineage>
</organism>
<evidence type="ECO:0000250" key="1">
    <source>
        <dbReference type="UniProtKB" id="O54790"/>
    </source>
</evidence>
<evidence type="ECO:0000250" key="2">
    <source>
        <dbReference type="UniProtKB" id="Q76MX4"/>
    </source>
</evidence>
<evidence type="ECO:0000255" key="3">
    <source>
        <dbReference type="PROSITE-ProRule" id="PRU00978"/>
    </source>
</evidence>
<evidence type="ECO:0000256" key="4">
    <source>
        <dbReference type="SAM" id="MobiDB-lite"/>
    </source>
</evidence>
<evidence type="ECO:0000269" key="5">
    <source>
    </source>
</evidence>
<evidence type="ECO:0000269" key="6">
    <source>
    </source>
</evidence>
<evidence type="ECO:0000269" key="7">
    <source>
    </source>
</evidence>
<evidence type="ECO:0000305" key="8"/>
<evidence type="ECO:0000305" key="9">
    <source>
    </source>
</evidence>
<evidence type="ECO:0007744" key="10">
    <source>
    </source>
</evidence>
<evidence type="ECO:0007744" key="11">
    <source>
    </source>
</evidence>
<evidence type="ECO:0007744" key="12">
    <source>
    </source>
</evidence>
<evidence type="ECO:0007744" key="13">
    <source>
    </source>
</evidence>
<evidence type="ECO:0007744" key="14">
    <source>
    </source>
</evidence>
<evidence type="ECO:0007744" key="15">
    <source>
    </source>
</evidence>
<evidence type="ECO:0007744" key="16">
    <source>
    </source>
</evidence>
<evidence type="ECO:0007829" key="17">
    <source>
        <dbReference type="PDB" id="7X5E"/>
    </source>
</evidence>
<evidence type="ECO:0007829" key="18">
    <source>
        <dbReference type="PDB" id="7X5G"/>
    </source>
</evidence>
<dbReference type="EMBL" id="Y11514">
    <property type="protein sequence ID" value="CAA72284.1"/>
    <property type="molecule type" value="mRNA"/>
</dbReference>
<dbReference type="EMBL" id="U84249">
    <property type="protein sequence ID" value="AAC51737.1"/>
    <property type="molecule type" value="mRNA"/>
</dbReference>
<dbReference type="EMBL" id="AF059195">
    <property type="protein sequence ID" value="AAC14427.1"/>
    <property type="molecule type" value="mRNA"/>
</dbReference>
<dbReference type="EMBL" id="BC012327">
    <property type="protein sequence ID" value="AAH12327.1"/>
    <property type="molecule type" value="mRNA"/>
</dbReference>
<dbReference type="CCDS" id="CCDS11793.1"/>
<dbReference type="RefSeq" id="NP_002350.1">
    <property type="nucleotide sequence ID" value="NM_002359.4"/>
</dbReference>
<dbReference type="RefSeq" id="NP_116100.2">
    <property type="nucleotide sequence ID" value="NM_032711.3"/>
</dbReference>
<dbReference type="RefSeq" id="XP_011521880.1">
    <property type="nucleotide sequence ID" value="XM_011523578.1"/>
</dbReference>
<dbReference type="RefSeq" id="XP_047292024.1">
    <property type="nucleotide sequence ID" value="XM_047436068.1"/>
</dbReference>
<dbReference type="RefSeq" id="XP_047292025.1">
    <property type="nucleotide sequence ID" value="XM_047436069.1"/>
</dbReference>
<dbReference type="RefSeq" id="XP_047292026.1">
    <property type="nucleotide sequence ID" value="XM_047436070.1"/>
</dbReference>
<dbReference type="RefSeq" id="XP_047292027.1">
    <property type="nucleotide sequence ID" value="XM_047436071.1"/>
</dbReference>
<dbReference type="RefSeq" id="XP_047292028.1">
    <property type="nucleotide sequence ID" value="XM_047436072.1"/>
</dbReference>
<dbReference type="RefSeq" id="XP_054172101.1">
    <property type="nucleotide sequence ID" value="XM_054316126.1"/>
</dbReference>
<dbReference type="RefSeq" id="XP_054172102.1">
    <property type="nucleotide sequence ID" value="XM_054316127.1"/>
</dbReference>
<dbReference type="RefSeq" id="XP_054172103.1">
    <property type="nucleotide sequence ID" value="XM_054316128.1"/>
</dbReference>
<dbReference type="RefSeq" id="XP_054172104.1">
    <property type="nucleotide sequence ID" value="XM_054316129.1"/>
</dbReference>
<dbReference type="RefSeq" id="XP_054172105.1">
    <property type="nucleotide sequence ID" value="XM_054316130.1"/>
</dbReference>
<dbReference type="PDB" id="7X5E">
    <property type="method" value="X-ray"/>
    <property type="resolution" value="2.30 A"/>
    <property type="chains" value="A/E=21-123"/>
</dbReference>
<dbReference type="PDB" id="7X5F">
    <property type="method" value="X-ray"/>
    <property type="resolution" value="2.60 A"/>
    <property type="chains" value="A/E=21-123"/>
</dbReference>
<dbReference type="PDB" id="7X5G">
    <property type="method" value="X-ray"/>
    <property type="resolution" value="2.30 A"/>
    <property type="chains" value="A/E=21-123"/>
</dbReference>
<dbReference type="PDBsum" id="7X5E"/>
<dbReference type="PDBsum" id="7X5F"/>
<dbReference type="PDBsum" id="7X5G"/>
<dbReference type="SMR" id="O15525"/>
<dbReference type="BioGRID" id="110272">
    <property type="interactions" value="42"/>
</dbReference>
<dbReference type="ComplexPortal" id="CPX-2485">
    <property type="entry name" value="bZIP transcription factor complex, BACH2-MAFG"/>
</dbReference>
<dbReference type="ComplexPortal" id="CPX-2872">
    <property type="entry name" value="bZIP transcription factor complex, BACH1-MAFG"/>
</dbReference>
<dbReference type="ComplexPortal" id="CPX-6481">
    <property type="entry name" value="bZIP transcription factor complex, ATF3-MAFG"/>
</dbReference>
<dbReference type="ComplexPortal" id="CPX-7105">
    <property type="entry name" value="bZIP transcription factor complex, BATF3-MAFG"/>
</dbReference>
<dbReference type="ELM" id="O15525"/>
<dbReference type="FunCoup" id="O15525">
    <property type="interactions" value="2302"/>
</dbReference>
<dbReference type="IntAct" id="O15525">
    <property type="interactions" value="30"/>
</dbReference>
<dbReference type="MINT" id="O15525"/>
<dbReference type="STRING" id="9606.ENSP00000350369"/>
<dbReference type="BindingDB" id="O15525"/>
<dbReference type="ChEMBL" id="CHEMBL5465260"/>
<dbReference type="GlyGen" id="O15525">
    <property type="glycosylation" value="1 site, 1 O-linked glycan (1 site)"/>
</dbReference>
<dbReference type="iPTMnet" id="O15525"/>
<dbReference type="PhosphoSitePlus" id="O15525"/>
<dbReference type="BioMuta" id="MAFG"/>
<dbReference type="jPOST" id="O15525"/>
<dbReference type="MassIVE" id="O15525"/>
<dbReference type="PaxDb" id="9606-ENSP00000350369"/>
<dbReference type="PeptideAtlas" id="O15525"/>
<dbReference type="ProteomicsDB" id="48725"/>
<dbReference type="Pumba" id="O15525"/>
<dbReference type="Antibodypedia" id="19851">
    <property type="antibodies" value="129 antibodies from 27 providers"/>
</dbReference>
<dbReference type="DNASU" id="4097"/>
<dbReference type="Ensembl" id="ENST00000357736.9">
    <property type="protein sequence ID" value="ENSP00000350369.4"/>
    <property type="gene ID" value="ENSG00000197063.11"/>
</dbReference>
<dbReference type="Ensembl" id="ENST00000392366.7">
    <property type="protein sequence ID" value="ENSP00000376173.3"/>
    <property type="gene ID" value="ENSG00000197063.11"/>
</dbReference>
<dbReference type="GeneID" id="4097"/>
<dbReference type="KEGG" id="hsa:4097"/>
<dbReference type="MANE-Select" id="ENST00000357736.9">
    <property type="protein sequence ID" value="ENSP00000350369.4"/>
    <property type="RefSeq nucleotide sequence ID" value="NM_002359.4"/>
    <property type="RefSeq protein sequence ID" value="NP_002350.1"/>
</dbReference>
<dbReference type="UCSC" id="uc002kcm.4">
    <property type="organism name" value="human"/>
</dbReference>
<dbReference type="AGR" id="HGNC:6781"/>
<dbReference type="CTD" id="4097"/>
<dbReference type="DisGeNET" id="4097"/>
<dbReference type="GeneCards" id="MAFG"/>
<dbReference type="HGNC" id="HGNC:6781">
    <property type="gene designation" value="MAFG"/>
</dbReference>
<dbReference type="HPA" id="ENSG00000197063">
    <property type="expression patterns" value="Low tissue specificity"/>
</dbReference>
<dbReference type="MIM" id="602020">
    <property type="type" value="gene"/>
</dbReference>
<dbReference type="neXtProt" id="NX_O15525"/>
<dbReference type="OpenTargets" id="ENSG00000197063"/>
<dbReference type="PharmGKB" id="PA30539"/>
<dbReference type="VEuPathDB" id="HostDB:ENSG00000197063"/>
<dbReference type="eggNOG" id="KOG4196">
    <property type="taxonomic scope" value="Eukaryota"/>
</dbReference>
<dbReference type="GeneTree" id="ENSGT00940000160070"/>
<dbReference type="HOGENOM" id="CLU_112948_0_0_1"/>
<dbReference type="InParanoid" id="O15525"/>
<dbReference type="OMA" id="QHSRYRF"/>
<dbReference type="OrthoDB" id="5974330at2759"/>
<dbReference type="PAN-GO" id="O15525">
    <property type="GO annotations" value="5 GO annotations based on evolutionary models"/>
</dbReference>
<dbReference type="PhylomeDB" id="O15525"/>
<dbReference type="TreeFam" id="TF325689"/>
<dbReference type="PathwayCommons" id="O15525"/>
<dbReference type="Reactome" id="R-HSA-9759194">
    <property type="pathway name" value="Nuclear events mediated by NFE2L2"/>
</dbReference>
<dbReference type="Reactome" id="R-HSA-9818028">
    <property type="pathway name" value="NFE2L2 regulates pentose phosphate pathway genes"/>
</dbReference>
<dbReference type="Reactome" id="R-HSA-983231">
    <property type="pathway name" value="Factors involved in megakaryocyte development and platelet production"/>
</dbReference>
<dbReference type="SignaLink" id="O15525"/>
<dbReference type="SIGNOR" id="O15525"/>
<dbReference type="BioGRID-ORCS" id="4097">
    <property type="hits" value="50 hits in 1165 CRISPR screens"/>
</dbReference>
<dbReference type="ChiTaRS" id="MAFG">
    <property type="organism name" value="human"/>
</dbReference>
<dbReference type="GeneWiki" id="MAFG"/>
<dbReference type="GenomeRNAi" id="4097"/>
<dbReference type="Pharos" id="O15525">
    <property type="development level" value="Tbio"/>
</dbReference>
<dbReference type="PRO" id="PR:O15525"/>
<dbReference type="Proteomes" id="UP000005640">
    <property type="component" value="Chromosome 17"/>
</dbReference>
<dbReference type="RNAct" id="O15525">
    <property type="molecule type" value="protein"/>
</dbReference>
<dbReference type="Bgee" id="ENSG00000197063">
    <property type="expression patterns" value="Expressed in secondary oocyte and 185 other cell types or tissues"/>
</dbReference>
<dbReference type="ExpressionAtlas" id="O15525">
    <property type="expression patterns" value="baseline and differential"/>
</dbReference>
<dbReference type="GO" id="GO:0005654">
    <property type="term" value="C:nucleoplasm"/>
    <property type="evidence" value="ECO:0000304"/>
    <property type="project" value="Reactome"/>
</dbReference>
<dbReference type="GO" id="GO:0005634">
    <property type="term" value="C:nucleus"/>
    <property type="evidence" value="ECO:0000318"/>
    <property type="project" value="GO_Central"/>
</dbReference>
<dbReference type="GO" id="GO:0090575">
    <property type="term" value="C:RNA polymerase II transcription regulator complex"/>
    <property type="evidence" value="ECO:0000353"/>
    <property type="project" value="ComplexPortal"/>
</dbReference>
<dbReference type="GO" id="GO:0001228">
    <property type="term" value="F:DNA-binding transcription activator activity, RNA polymerase II-specific"/>
    <property type="evidence" value="ECO:0007669"/>
    <property type="project" value="Ensembl"/>
</dbReference>
<dbReference type="GO" id="GO:0003700">
    <property type="term" value="F:DNA-binding transcription factor activity"/>
    <property type="evidence" value="ECO:0000303"/>
    <property type="project" value="ProtInc"/>
</dbReference>
<dbReference type="GO" id="GO:0000981">
    <property type="term" value="F:DNA-binding transcription factor activity, RNA polymerase II-specific"/>
    <property type="evidence" value="ECO:0000318"/>
    <property type="project" value="GO_Central"/>
</dbReference>
<dbReference type="GO" id="GO:0042802">
    <property type="term" value="F:identical protein binding"/>
    <property type="evidence" value="ECO:0000353"/>
    <property type="project" value="IntAct"/>
</dbReference>
<dbReference type="GO" id="GO:0000978">
    <property type="term" value="F:RNA polymerase II cis-regulatory region sequence-specific DNA binding"/>
    <property type="evidence" value="ECO:0000318"/>
    <property type="project" value="GO_Central"/>
</dbReference>
<dbReference type="GO" id="GO:1990837">
    <property type="term" value="F:sequence-specific double-stranded DNA binding"/>
    <property type="evidence" value="ECO:0000314"/>
    <property type="project" value="ARUK-UCL"/>
</dbReference>
<dbReference type="GO" id="GO:0030534">
    <property type="term" value="P:adult behavior"/>
    <property type="evidence" value="ECO:0007669"/>
    <property type="project" value="Ensembl"/>
</dbReference>
<dbReference type="GO" id="GO:0001701">
    <property type="term" value="P:in utero embryonic development"/>
    <property type="evidence" value="ECO:0007669"/>
    <property type="project" value="Ensembl"/>
</dbReference>
<dbReference type="GO" id="GO:0000122">
    <property type="term" value="P:negative regulation of transcription by RNA polymerase II"/>
    <property type="evidence" value="ECO:0000303"/>
    <property type="project" value="ComplexPortal"/>
</dbReference>
<dbReference type="GO" id="GO:0010628">
    <property type="term" value="P:positive regulation of gene expression"/>
    <property type="evidence" value="ECO:0007669"/>
    <property type="project" value="Ensembl"/>
</dbReference>
<dbReference type="GO" id="GO:0042127">
    <property type="term" value="P:regulation of cell population proliferation"/>
    <property type="evidence" value="ECO:0007669"/>
    <property type="project" value="Ensembl"/>
</dbReference>
<dbReference type="GO" id="GO:0045604">
    <property type="term" value="P:regulation of epidermal cell differentiation"/>
    <property type="evidence" value="ECO:0000318"/>
    <property type="project" value="GO_Central"/>
</dbReference>
<dbReference type="GO" id="GO:0006357">
    <property type="term" value="P:regulation of transcription by RNA polymerase II"/>
    <property type="evidence" value="ECO:0000318"/>
    <property type="project" value="GO_Central"/>
</dbReference>
<dbReference type="CDD" id="cd14717">
    <property type="entry name" value="bZIP_Maf_small"/>
    <property type="match status" value="1"/>
</dbReference>
<dbReference type="FunFam" id="1.20.5.170:FF:000011">
    <property type="entry name" value="Transcription factor MafG, putative"/>
    <property type="match status" value="1"/>
</dbReference>
<dbReference type="Gene3D" id="1.20.5.170">
    <property type="match status" value="1"/>
</dbReference>
<dbReference type="InterPro" id="IPR004827">
    <property type="entry name" value="bZIP"/>
</dbReference>
<dbReference type="InterPro" id="IPR004826">
    <property type="entry name" value="bZIP_Maf"/>
</dbReference>
<dbReference type="InterPro" id="IPR046347">
    <property type="entry name" value="bZIP_sf"/>
</dbReference>
<dbReference type="InterPro" id="IPR008917">
    <property type="entry name" value="TF_DNA-bd_sf"/>
</dbReference>
<dbReference type="InterPro" id="IPR024874">
    <property type="entry name" value="Transcription_factor_Maf_fam"/>
</dbReference>
<dbReference type="PANTHER" id="PTHR10129">
    <property type="entry name" value="TRANSCRIPTION FACTOR MAF"/>
    <property type="match status" value="1"/>
</dbReference>
<dbReference type="PANTHER" id="PTHR10129:SF15">
    <property type="entry name" value="TRANSCRIPTION FACTOR MAFG"/>
    <property type="match status" value="1"/>
</dbReference>
<dbReference type="Pfam" id="PF03131">
    <property type="entry name" value="bZIP_Maf"/>
    <property type="match status" value="1"/>
</dbReference>
<dbReference type="SMART" id="SM00338">
    <property type="entry name" value="BRLZ"/>
    <property type="match status" value="1"/>
</dbReference>
<dbReference type="SUPFAM" id="SSF47454">
    <property type="entry name" value="A DNA-binding domain in eukaryotic transcription factors"/>
    <property type="match status" value="1"/>
</dbReference>
<dbReference type="SUPFAM" id="SSF57959">
    <property type="entry name" value="Leucine zipper domain"/>
    <property type="match status" value="1"/>
</dbReference>
<dbReference type="PROSITE" id="PS50217">
    <property type="entry name" value="BZIP"/>
    <property type="match status" value="1"/>
</dbReference>